<sequence length="510" mass="56962">MVNQAFMLWCYITPVLGAVVAEQYIGRVKTIIFSSSVYLCGLVTLFLSSLPTAYAMGISLPGLLVSLFLIGIGTGGIKTNVSSLIAEQYTGPKESRRILKSGEEVIVDRDLTIQRIFTTFFLYINIGSFSPLLITIIEKEYGFSAAFSLSAITFSIGFIIVLVSRHLYISRDPDSSIIFNACKAFWIAIKHKGNLDYARPSYQTEQAATRRLSWDDSFIDDLRRAIASCKIFILYPIYWAAYSQFLTNFISQAATMETHGVPNDIMTNIDPITVLILLPVLDRIVFPFLRRQGVPVRHVDRITIGMPDFQPFVQESYQICQRTCFQIISAIELGLGLQAGRLTQCCQPAASEIRLLYYPPTTKNLFDEGLKKRAWPHTDLGIITLLFQDMVGGLEVEDRAAGKPRSFIPVKRVSPNEMIVNTSDSLQRWTNNVIRAGLHQVTAPDAAKLSNGVDMLPARCSSVFFFKAGRDTSVGPLPEFVTEDRPAAFEDMTALQYQQLKTRILHGVEG</sequence>
<organism>
    <name type="scientific">Aspergillus flavus (strain ATCC 200026 / FGSC A1120 / IAM 13836 / NRRL 3357 / JCM 12722 / SRRC 167)</name>
    <dbReference type="NCBI Taxonomy" id="332952"/>
    <lineage>
        <taxon>Eukaryota</taxon>
        <taxon>Fungi</taxon>
        <taxon>Dikarya</taxon>
        <taxon>Ascomycota</taxon>
        <taxon>Pezizomycotina</taxon>
        <taxon>Eurotiomycetes</taxon>
        <taxon>Eurotiomycetidae</taxon>
        <taxon>Eurotiales</taxon>
        <taxon>Aspergillaceae</taxon>
        <taxon>Aspergillus</taxon>
        <taxon>Aspergillus subgen. Circumdati</taxon>
    </lineage>
</organism>
<evidence type="ECO:0000255" key="1"/>
<evidence type="ECO:0000255" key="2">
    <source>
        <dbReference type="PROSITE-ProRule" id="PRU00498"/>
    </source>
</evidence>
<evidence type="ECO:0000255" key="3">
    <source>
        <dbReference type="PROSITE-ProRule" id="PRU00805"/>
    </source>
</evidence>
<evidence type="ECO:0000269" key="4">
    <source>
    </source>
</evidence>
<evidence type="ECO:0000303" key="5">
    <source>
    </source>
</evidence>
<evidence type="ECO:0000305" key="6"/>
<comment type="function">
    <text evidence="4">Peptide transporter; part of the gene cluster that mediates the biosynthesis of imizoquins A to D, tripeptide-derived alkaloids that serve a protective role against oxidative stress that are essential for normal germination (PubMed:29182847).</text>
</comment>
<comment type="subcellular location">
    <subcellularLocation>
        <location evidence="1">Membrane</location>
        <topology evidence="1">Multi-pass membrane protein</topology>
    </subcellularLocation>
</comment>
<comment type="induction">
    <text evidence="4">Expression is down-regulated by ralstonins, lipopeptides produced by the plant pathogenic bacteria Ralstonia solanacearum (PubMed:29182847). Expression is positively regulated by the imizoquins cluster-specific transcription regulator imqK (PubMed:29182847).</text>
</comment>
<comment type="similarity">
    <text evidence="6">Belongs to the major facilitator superfamily. Proton-dependent oligopeptide transporter (POT/PTR) (TC 2.A.17) family.</text>
</comment>
<keyword id="KW-0223">Dioxygenase</keyword>
<keyword id="KW-0325">Glycoprotein</keyword>
<keyword id="KW-0408">Iron</keyword>
<keyword id="KW-0472">Membrane</keyword>
<keyword id="KW-0479">Metal-binding</keyword>
<keyword id="KW-0560">Oxidoreductase</keyword>
<keyword id="KW-0812">Transmembrane</keyword>
<keyword id="KW-1133">Transmembrane helix</keyword>
<gene>
    <name evidence="5" type="primary">imqJ</name>
    <name type="ORF">AFLA_064320</name>
</gene>
<protein>
    <recommendedName>
        <fullName evidence="5">Peptide transporter imqJ</fullName>
    </recommendedName>
    <alternativeName>
        <fullName evidence="5">Imizoquin biosynthesis cluster protein J</fullName>
    </alternativeName>
</protein>
<name>IMQJ_ASPFN</name>
<reference key="1">
    <citation type="journal article" date="2015" name="Genome Announc.">
        <title>Genome sequence of Aspergillus flavus NRRL 3357, a strain that causes aflatoxin contamination of food and feed.</title>
        <authorList>
            <person name="Nierman W.C."/>
            <person name="Yu J."/>
            <person name="Fedorova-Abrams N.D."/>
            <person name="Losada L."/>
            <person name="Cleveland T.E."/>
            <person name="Bhatnagar D."/>
            <person name="Bennett J.W."/>
            <person name="Dean R."/>
            <person name="Payne G.A."/>
        </authorList>
    </citation>
    <scope>NUCLEOTIDE SEQUENCE [LARGE SCALE GENOMIC DNA]</scope>
    <source>
        <strain>ATCC 200026 / FGSC A1120 / IAM 13836 / NRRL 3357 / JCM 12722 / SRRC 167</strain>
    </source>
</reference>
<reference key="2">
    <citation type="journal article" date="2018" name="ACS Chem. Biol.">
        <title>NRPS-derived isoquinolines and lipopetides mediate antagonism between plant pathogenic fungi and bacteria.</title>
        <authorList>
            <person name="Khalid S."/>
            <person name="Baccile J.A."/>
            <person name="Spraker J.E."/>
            <person name="Tannous J."/>
            <person name="Imran M."/>
            <person name="Schroeder F.C."/>
            <person name="Keller N.P."/>
        </authorList>
    </citation>
    <scope>INDUCTION</scope>
    <scope>FUNCTION</scope>
</reference>
<proteinExistence type="evidence at transcript level"/>
<dbReference type="EMBL" id="EQ963479">
    <property type="protein sequence ID" value="EED49611.1"/>
    <property type="molecule type" value="Genomic_DNA"/>
</dbReference>
<dbReference type="RefSeq" id="XP_002379992.1">
    <property type="nucleotide sequence ID" value="XM_002379951.1"/>
</dbReference>
<dbReference type="SMR" id="B8NI27"/>
<dbReference type="STRING" id="332952.B8NI27"/>
<dbReference type="GlyCosmos" id="B8NI27">
    <property type="glycosylation" value="2 sites, No reported glycans"/>
</dbReference>
<dbReference type="EnsemblFungi" id="EED49611">
    <property type="protein sequence ID" value="EED49611"/>
    <property type="gene ID" value="AFLA_064320"/>
</dbReference>
<dbReference type="VEuPathDB" id="FungiDB:AFLA_008365"/>
<dbReference type="eggNOG" id="KOG0143">
    <property type="taxonomic scope" value="Eukaryota"/>
</dbReference>
<dbReference type="eggNOG" id="KOG1237">
    <property type="taxonomic scope" value="Eukaryota"/>
</dbReference>
<dbReference type="HOGENOM" id="CLU_534158_0_0_1"/>
<dbReference type="GO" id="GO:0016020">
    <property type="term" value="C:membrane"/>
    <property type="evidence" value="ECO:0007669"/>
    <property type="project" value="UniProtKB-SubCell"/>
</dbReference>
<dbReference type="GO" id="GO:0051213">
    <property type="term" value="F:dioxygenase activity"/>
    <property type="evidence" value="ECO:0007669"/>
    <property type="project" value="UniProtKB-KW"/>
</dbReference>
<dbReference type="GO" id="GO:0046872">
    <property type="term" value="F:metal ion binding"/>
    <property type="evidence" value="ECO:0007669"/>
    <property type="project" value="UniProtKB-KW"/>
</dbReference>
<dbReference type="GO" id="GO:0022857">
    <property type="term" value="F:transmembrane transporter activity"/>
    <property type="evidence" value="ECO:0007669"/>
    <property type="project" value="InterPro"/>
</dbReference>
<dbReference type="GO" id="GO:0006857">
    <property type="term" value="P:oligopeptide transport"/>
    <property type="evidence" value="ECO:0007669"/>
    <property type="project" value="InterPro"/>
</dbReference>
<dbReference type="Gene3D" id="2.60.120.330">
    <property type="entry name" value="B-lactam Antibiotic, Isopenicillin N Synthase, Chain"/>
    <property type="match status" value="1"/>
</dbReference>
<dbReference type="Gene3D" id="1.20.1250.20">
    <property type="entry name" value="MFS general substrate transporter like domains"/>
    <property type="match status" value="1"/>
</dbReference>
<dbReference type="InterPro" id="IPR044861">
    <property type="entry name" value="IPNS-like_FE2OG_OXY"/>
</dbReference>
<dbReference type="InterPro" id="IPR027443">
    <property type="entry name" value="IPNS-like_sf"/>
</dbReference>
<dbReference type="InterPro" id="IPR036259">
    <property type="entry name" value="MFS_trans_sf"/>
</dbReference>
<dbReference type="InterPro" id="IPR005123">
    <property type="entry name" value="Oxoglu/Fe-dep_dioxygenase_dom"/>
</dbReference>
<dbReference type="InterPro" id="IPR000109">
    <property type="entry name" value="POT_fam"/>
</dbReference>
<dbReference type="InterPro" id="IPR018456">
    <property type="entry name" value="PTR2_symporter_CS"/>
</dbReference>
<dbReference type="PANTHER" id="PTHR11654">
    <property type="entry name" value="OLIGOPEPTIDE TRANSPORTER-RELATED"/>
    <property type="match status" value="1"/>
</dbReference>
<dbReference type="Pfam" id="PF03171">
    <property type="entry name" value="2OG-FeII_Oxy"/>
    <property type="match status" value="1"/>
</dbReference>
<dbReference type="Pfam" id="PF00854">
    <property type="entry name" value="PTR2"/>
    <property type="match status" value="1"/>
</dbReference>
<dbReference type="SUPFAM" id="SSF51197">
    <property type="entry name" value="Clavaminate synthase-like"/>
    <property type="match status" value="1"/>
</dbReference>
<dbReference type="SUPFAM" id="SSF103473">
    <property type="entry name" value="MFS general substrate transporter"/>
    <property type="match status" value="1"/>
</dbReference>
<dbReference type="PROSITE" id="PS51471">
    <property type="entry name" value="FE2OG_OXY"/>
    <property type="match status" value="1"/>
</dbReference>
<dbReference type="PROSITE" id="PS01023">
    <property type="entry name" value="PTR2_2"/>
    <property type="match status" value="1"/>
</dbReference>
<feature type="chain" id="PRO_0000444549" description="Peptide transporter imqJ">
    <location>
        <begin position="1"/>
        <end position="510"/>
    </location>
</feature>
<feature type="transmembrane region" description="Helical" evidence="1">
    <location>
        <begin position="1"/>
        <end position="21"/>
    </location>
</feature>
<feature type="transmembrane region" description="Helical" evidence="1">
    <location>
        <begin position="31"/>
        <end position="51"/>
    </location>
</feature>
<feature type="transmembrane region" description="Helical" evidence="1">
    <location>
        <begin position="57"/>
        <end position="77"/>
    </location>
</feature>
<feature type="transmembrane region" description="Helical" evidence="1">
    <location>
        <begin position="116"/>
        <end position="136"/>
    </location>
</feature>
<feature type="transmembrane region" description="Helical" evidence="1">
    <location>
        <begin position="143"/>
        <end position="163"/>
    </location>
</feature>
<feature type="transmembrane region" description="Helical" evidence="1">
    <location>
        <begin position="231"/>
        <end position="251"/>
    </location>
</feature>
<feature type="transmembrane region" description="Helical" evidence="1">
    <location>
        <begin position="269"/>
        <end position="289"/>
    </location>
</feature>
<feature type="domain" description="Fe2OG dioxygenase" evidence="3">
    <location>
        <begin position="348"/>
        <end position="468"/>
    </location>
</feature>
<feature type="binding site" evidence="3">
    <location>
        <position position="377"/>
    </location>
    <ligand>
        <name>Fe cation</name>
        <dbReference type="ChEBI" id="CHEBI:24875"/>
    </ligand>
</feature>
<feature type="binding site" evidence="3">
    <location>
        <position position="379"/>
    </location>
    <ligand>
        <name>Fe cation</name>
        <dbReference type="ChEBI" id="CHEBI:24875"/>
    </ligand>
</feature>
<feature type="binding site" evidence="3">
    <location>
        <position position="439"/>
    </location>
    <ligand>
        <name>Fe cation</name>
        <dbReference type="ChEBI" id="CHEBI:24875"/>
    </ligand>
</feature>
<feature type="binding site" evidence="3">
    <location>
        <position position="459"/>
    </location>
    <ligand>
        <name>2-oxoglutarate</name>
        <dbReference type="ChEBI" id="CHEBI:16810"/>
    </ligand>
</feature>
<feature type="glycosylation site" description="N-linked (GlcNAc...) asparagine" evidence="2">
    <location>
        <position position="80"/>
    </location>
</feature>
<feature type="glycosylation site" description="N-linked (GlcNAc...) asparagine" evidence="2">
    <location>
        <position position="421"/>
    </location>
</feature>
<accession>B8NI27</accession>